<comment type="function">
    <text evidence="5 6 7 8">Completely dephosphorylates 'Ser-2', and partially 'Ser-5' and 'Ser-7' of the heptad repeats YSPTSPS in the C-terminal domain (CTD) of the largest RNA polymerase II subunit (RPB1) (PubMed:25464831). Involved in defense response (PubMed:25464831). Acts as a negative regulator of immune gene expression and immunity to pathogen infections (PubMed:25464831). Preferentially dephosphorylates 'Ser-2' of RNA polymerase II CTD (PubMed:25464831). This counterregulates the MAP kinase (MAPK) or cyclin-dependent kinase C (CDKC)-mediated phosphorylation of CTD in response to pathogens and upon perception of microbe-associated molecular patterns (MAMPs) (PubMed:25464831). MAPKs phosphorylate and activate CDKCs, which are CTD kinases that positively regulate plant innate immunity (PubMed:25464831). Acts as a negative regulator of stress gene transcription involved in abscisic acid (ABA) mediated signaling pathway and cold resistance (PubMed:12149434, PubMed:16905668). Acts as a post-transcriptional gene silencing (PTGS) suppressor (PubMed:31076735).</text>
</comment>
<comment type="catalytic activity">
    <reaction evidence="5">
        <text>O-phospho-L-seryl-[protein] + H2O = L-seryl-[protein] + phosphate</text>
        <dbReference type="Rhea" id="RHEA:20629"/>
        <dbReference type="Rhea" id="RHEA-COMP:9863"/>
        <dbReference type="Rhea" id="RHEA-COMP:11604"/>
        <dbReference type="ChEBI" id="CHEBI:15377"/>
        <dbReference type="ChEBI" id="CHEBI:29999"/>
        <dbReference type="ChEBI" id="CHEBI:43474"/>
        <dbReference type="ChEBI" id="CHEBI:83421"/>
        <dbReference type="EC" id="3.1.3.16"/>
    </reaction>
</comment>
<comment type="catalytic activity">
    <reaction evidence="5">
        <text>O-phospho-L-threonyl-[protein] + H2O = L-threonyl-[protein] + phosphate</text>
        <dbReference type="Rhea" id="RHEA:47004"/>
        <dbReference type="Rhea" id="RHEA-COMP:11060"/>
        <dbReference type="Rhea" id="RHEA-COMP:11605"/>
        <dbReference type="ChEBI" id="CHEBI:15377"/>
        <dbReference type="ChEBI" id="CHEBI:30013"/>
        <dbReference type="ChEBI" id="CHEBI:43474"/>
        <dbReference type="ChEBI" id="CHEBI:61977"/>
        <dbReference type="EC" id="3.1.3.16"/>
    </reaction>
</comment>
<comment type="cofactor">
    <cofactor evidence="1">
        <name>Mg(2+)</name>
        <dbReference type="ChEBI" id="CHEBI:18420"/>
    </cofactor>
    <cofactor evidence="1">
        <name>Co(2+)</name>
        <dbReference type="ChEBI" id="CHEBI:48828"/>
    </cofactor>
    <cofactor evidence="1">
        <name>Mn(2+)</name>
        <dbReference type="ChEBI" id="CHEBI:29035"/>
    </cofactor>
    <text evidence="1">Binds Mg(2+), Co(2+) or Mn(2+).</text>
</comment>
<comment type="subunit">
    <text evidence="6">Interacts with RAP74.</text>
</comment>
<comment type="subcellular location">
    <subcellularLocation>
        <location evidence="6 7">Nucleus</location>
    </subcellularLocation>
</comment>
<comment type="induction">
    <text evidence="6">By NaCl.</text>
</comment>
<comment type="domain">
    <text>The BRCT domain is required for interaction with RAP74.</text>
</comment>
<comment type="disruption phenotype">
    <text evidence="5 6">Grows more slowly and flower earlier than wild-type plants. ABA hyperactivation of stress-inducible genes.</text>
</comment>
<comment type="sequence caution" evidence="12">
    <conflict type="erroneous gene model prediction">
        <sequence resource="EMBL-CDS" id="AAB80671"/>
    </conflict>
</comment>
<keyword id="KW-0378">Hydrolase</keyword>
<keyword id="KW-0479">Metal-binding</keyword>
<keyword id="KW-0539">Nucleus</keyword>
<keyword id="KW-0611">Plant defense</keyword>
<keyword id="KW-1185">Reference proteome</keyword>
<keyword id="KW-0678">Repressor</keyword>
<keyword id="KW-0694">RNA-binding</keyword>
<keyword id="KW-0804">Transcription</keyword>
<keyword id="KW-0805">Transcription regulation</keyword>
<gene>
    <name evidence="9" type="primary">CPL3</name>
    <name evidence="11" type="synonym">AGGIE1</name>
    <name evidence="13" type="ordered locus">At2g33540</name>
    <name evidence="14" type="ORF">F4P9.31</name>
</gene>
<accession>Q8LL04</accession>
<accession>O22804</accession>
<reference key="1">
    <citation type="journal article" date="2002" name="Proc. Natl. Acad. Sci. U.S.A.">
        <title>C-terminal domain phosphatase-like family members (AtCPLs) differentially regulate Arabidopsis thaliana abiotic stress signaling, growth, and development.</title>
        <authorList>
            <person name="Koiwa H."/>
            <person name="Barb A.W."/>
            <person name="Xiong L."/>
            <person name="Li F."/>
            <person name="McCully M.G."/>
            <person name="Lee B.-H."/>
            <person name="Sokolchik I."/>
            <person name="Zhu J."/>
            <person name="Gong Z."/>
            <person name="Reddy M."/>
            <person name="Sharkhuu A."/>
            <person name="Manabe Y."/>
            <person name="Yokoi S."/>
            <person name="Zhu J.-K."/>
            <person name="Bressan R.A."/>
            <person name="Hasegawa P.M."/>
        </authorList>
    </citation>
    <scope>NUCLEOTIDE SEQUENCE [MRNA]</scope>
    <scope>FUNCTION</scope>
    <scope>CATALYTIC ACTIVITY</scope>
    <scope>DISRUPTION PHENOTYPE</scope>
</reference>
<reference key="2">
    <citation type="journal article" date="1999" name="Nature">
        <title>Sequence and analysis of chromosome 2 of the plant Arabidopsis thaliana.</title>
        <authorList>
            <person name="Lin X."/>
            <person name="Kaul S."/>
            <person name="Rounsley S.D."/>
            <person name="Shea T.P."/>
            <person name="Benito M.-I."/>
            <person name="Town C.D."/>
            <person name="Fujii C.Y."/>
            <person name="Mason T.M."/>
            <person name="Bowman C.L."/>
            <person name="Barnstead M.E."/>
            <person name="Feldblyum T.V."/>
            <person name="Buell C.R."/>
            <person name="Ketchum K.A."/>
            <person name="Lee J.J."/>
            <person name="Ronning C.M."/>
            <person name="Koo H.L."/>
            <person name="Moffat K.S."/>
            <person name="Cronin L.A."/>
            <person name="Shen M."/>
            <person name="Pai G."/>
            <person name="Van Aken S."/>
            <person name="Umayam L."/>
            <person name="Tallon L.J."/>
            <person name="Gill J.E."/>
            <person name="Adams M.D."/>
            <person name="Carrera A.J."/>
            <person name="Creasy T.H."/>
            <person name="Goodman H.M."/>
            <person name="Somerville C.R."/>
            <person name="Copenhaver G.P."/>
            <person name="Preuss D."/>
            <person name="Nierman W.C."/>
            <person name="White O."/>
            <person name="Eisen J.A."/>
            <person name="Salzberg S.L."/>
            <person name="Fraser C.M."/>
            <person name="Venter J.C."/>
        </authorList>
    </citation>
    <scope>NUCLEOTIDE SEQUENCE [LARGE SCALE GENOMIC DNA]</scope>
    <source>
        <strain>cv. Columbia</strain>
    </source>
</reference>
<reference key="3">
    <citation type="journal article" date="2017" name="Plant J.">
        <title>Araport11: a complete reannotation of the Arabidopsis thaliana reference genome.</title>
        <authorList>
            <person name="Cheng C.Y."/>
            <person name="Krishnakumar V."/>
            <person name="Chan A.P."/>
            <person name="Thibaud-Nissen F."/>
            <person name="Schobel S."/>
            <person name="Town C.D."/>
        </authorList>
    </citation>
    <scope>GENOME REANNOTATION</scope>
    <source>
        <strain>cv. Columbia</strain>
    </source>
</reference>
<reference key="4">
    <citation type="journal article" date="2006" name="Plant Physiol.">
        <title>Arabidopsis carboxyl-terminal domain phosphatase-like isoforms share common catalytic and interaction domains but have distinct in planta functions.</title>
        <authorList>
            <person name="Bang W."/>
            <person name="Kim S."/>
            <person name="Ueda A."/>
            <person name="Vikram M."/>
            <person name="Yun D."/>
            <person name="Bressan R.A."/>
            <person name="Hasegawa P.M."/>
            <person name="Bahk J."/>
            <person name="Koiwa H."/>
        </authorList>
    </citation>
    <scope>FUNCTION</scope>
    <scope>INTERACTION WITH RAP74</scope>
    <scope>DISRUPTION PHENOTYPE</scope>
    <scope>INDUCTION BY NACL</scope>
    <scope>BRCT DOMAIN</scope>
    <scope>SUBCELLULAR LOCATION</scope>
</reference>
<reference key="5">
    <citation type="journal article" date="2008" name="Plant Physiol.">
        <title>Evolutionary radiation pattern of novel protein phosphatases revealed by analysis of protein data from the completely sequenced genomes of humans, green algae, and higher plants.</title>
        <authorList>
            <person name="Kerk D."/>
            <person name="Templeton G."/>
            <person name="Moorhead G.B.G."/>
        </authorList>
    </citation>
    <scope>GENE FAMILY</scope>
</reference>
<reference key="6">
    <citation type="journal article" date="2009" name="Plant Physiol.">
        <title>Large-scale Arabidopsis phosphoproteome profiling reveals novel chloroplast kinase substrates and phosphorylation networks.</title>
        <authorList>
            <person name="Reiland S."/>
            <person name="Messerli G."/>
            <person name="Baerenfaller K."/>
            <person name="Gerrits B."/>
            <person name="Endler A."/>
            <person name="Grossmann J."/>
            <person name="Gruissem W."/>
            <person name="Baginsky S."/>
        </authorList>
    </citation>
    <scope>IDENTIFICATION BY MASS SPECTROMETRY [LARGE SCALE ANALYSIS]</scope>
</reference>
<reference key="7">
    <citation type="journal article" date="2014" name="Cell Host Microbe">
        <title>Modulation of RNA polymerase II phosphorylation downstream of pathogen perception orchestrates plant immunity.</title>
        <authorList>
            <person name="Li F."/>
            <person name="Cheng C."/>
            <person name="Cui F."/>
            <person name="de Oliveira M.V."/>
            <person name="Yu X."/>
            <person name="Meng X."/>
            <person name="Intorne A.C."/>
            <person name="Babilonia K."/>
            <person name="Li M."/>
            <person name="Li B."/>
            <person name="Chen S."/>
            <person name="Ma X."/>
            <person name="Xiao S."/>
            <person name="Zheng Y."/>
            <person name="Fei Z."/>
            <person name="Metz R.P."/>
            <person name="Johnson C.D."/>
            <person name="Koiwa H."/>
            <person name="Sun W."/>
            <person name="Li Z."/>
            <person name="de Souza Filho G.A."/>
            <person name="Shan L."/>
            <person name="He P."/>
        </authorList>
    </citation>
    <scope>FUNCTION</scope>
    <scope>SUBCELLULAR LOCATION</scope>
    <scope>MUTAGENESIS OF ASP-933; ASP-1064 AND ASP-1065</scope>
</reference>
<reference key="8">
    <citation type="journal article" date="2019" name="Nat. Plants">
        <title>A genetics screen highlights emerging roles for CPL3, RST1 and URT1 in RNA metabolism and silencing.</title>
        <authorList>
            <person name="Li T."/>
            <person name="Natran A."/>
            <person name="Chen Y."/>
            <person name="Vercruysse J."/>
            <person name="Wang K."/>
            <person name="Gonzalez N."/>
            <person name="Dubois M."/>
            <person name="Inze D."/>
        </authorList>
    </citation>
    <scope>FUNCTION</scope>
</reference>
<protein>
    <recommendedName>
        <fullName evidence="11">RNA polymerase II C-terminal domain phosphatase-like 3</fullName>
        <shortName evidence="12">FCP-like 3</shortName>
        <ecNumber evidence="5">3.1.3.16</ecNumber>
    </recommendedName>
    <alternativeName>
        <fullName evidence="9">Carboxyl-terminal phosphatase-like 3</fullName>
        <shortName evidence="9">AtCPL3</shortName>
        <shortName evidence="10">CTD phosphatase-like 3</shortName>
    </alternativeName>
</protein>
<sequence>MLVARSGCSRTLIRMGNDENLMVMVDVEEGEIPDSVNTEIEVKHKSTTTTADVGGDVDVGVVAGGRGGGGGGSNGNSRVWTMEELISQYPAYRPYANSGLSNLAWARAVQNKPFNEGLVMDYEPRESDKIVIEDSDDEKEEGELEEGEIDLVDNASDDNLVEKDTESVVLISADKVEDDRILKERDLEKKVKLIRGVLESTSLVEAQTGFEGVCSRILGALESLRELVSDNDDFPKRDTLVQLSFASLQTINYVFCSMNNISKERNKETMSRLLTLVNDHFSQFLSFNQKNEIETMNQDLSRSAIAVFAGTSSEENVNQMTQPSNGDSFLAKKLTSESTHRGAAYLRSRLPMLPLLDLHKDHDADSLPSPTRETTPSLPVNGRHTMVRPGFPVGRESQTTEGAKVYSYESDARKAVSTYQQKFGLNSVFKTDDLPSPTPSGEPNDGNGDVGGEVSSSVVKSSNPGSHLIYGQDVPLPSNFNSRSMPVANSVSSTVPPHHLSIHAISAPTASDQTVKPSAKSRDPRLRLAKPDAANVTIYSYSSGDARNLSKVELSADLVNPRKQKAADEFLIDGPAWKRQKSDTDAPKAAGTGGWLEDTESSGLLKLESKPRLIENGVTSMTSSVMPTSAVSVSQKVRTASTDTASLQSLLKDIAVNPTMLLNLLKMGERQKVPEKAIQKPMDPRRAAQLPGSSVQPGVSTPLSIPASNALAANSLNSGVLQDSSQNAPAAESGSIRMKPRDPRRILHGSTLQRTDSSMEKQTKVNDPSTLGTLTMKGKAEDLETPPQLDPRQNISQNGTSKMKISGELLSGKTPDFSTQFTKNLKSIADMVVVSQQLGNPPASMHSVQLKTERDVKHNPSNPNAQDEDVSVSAASVTAAAGPTRSMNSWGDVEHLFEGYDDIQRVAIQRERVRRLEEQNKMFASQKLSLVLDIDHTLLNSAKFNEVESRHEEILRKKEEQDREKPYRHLFRFLHMGMWTKLRPGIWNFLEKASKLYELHLYTMGNKLYATEMAKLLDPKGVLFNGRVISKGDDGDPLDGDERVPKSKDLEGVMGMESSVVIIDDSVRVWPQHKMNLIAVERYLYFPCSRRQFGLLGPSLLELDRDEVPEEGTLASSLAVIEKIHQNFFSHTSLDEVDVRNILASEQRKILAGCRIVFSRIIPVGEAKPHLHPLWQTAEQFGAVCTTQVDEHVTHVVTNSLGTDKVNWALTRGRFVVHPGWVEASAFLYQRANENLYAINP</sequence>
<name>CPL3_ARATH</name>
<proteinExistence type="evidence at protein level"/>
<feature type="chain" id="PRO_0000376085" description="RNA polymerase II C-terminal domain phosphatase-like 3">
    <location>
        <begin position="1"/>
        <end position="1241"/>
    </location>
</feature>
<feature type="domain" description="FCP1 homology" evidence="3">
    <location>
        <begin position="923"/>
        <end position="1103"/>
    </location>
</feature>
<feature type="domain" description="BRCT" evidence="2">
    <location>
        <begin position="1146"/>
        <end position="1239"/>
    </location>
</feature>
<feature type="region of interest" description="Disordered" evidence="4">
    <location>
        <begin position="361"/>
        <end position="402"/>
    </location>
</feature>
<feature type="region of interest" description="Disordered" evidence="4">
    <location>
        <begin position="428"/>
        <end position="470"/>
    </location>
</feature>
<feature type="region of interest" description="Disordered" evidence="4">
    <location>
        <begin position="505"/>
        <end position="525"/>
    </location>
</feature>
<feature type="region of interest" description="Disordered" evidence="4">
    <location>
        <begin position="578"/>
        <end position="598"/>
    </location>
</feature>
<feature type="region of interest" description="Disordered" evidence="4">
    <location>
        <begin position="677"/>
        <end position="702"/>
    </location>
</feature>
<feature type="region of interest" description="Disordered" evidence="4">
    <location>
        <begin position="720"/>
        <end position="800"/>
    </location>
</feature>
<feature type="region of interest" description="Disordered" evidence="4">
    <location>
        <begin position="852"/>
        <end position="885"/>
    </location>
</feature>
<feature type="compositionally biased region" description="Polar residues" evidence="4">
    <location>
        <begin position="368"/>
        <end position="378"/>
    </location>
</feature>
<feature type="compositionally biased region" description="Low complexity" evidence="4">
    <location>
        <begin position="441"/>
        <end position="466"/>
    </location>
</feature>
<feature type="compositionally biased region" description="Basic and acidic residues" evidence="4">
    <location>
        <begin position="677"/>
        <end position="686"/>
    </location>
</feature>
<feature type="compositionally biased region" description="Polar residues" evidence="4">
    <location>
        <begin position="691"/>
        <end position="702"/>
    </location>
</feature>
<feature type="compositionally biased region" description="Polar residues" evidence="4">
    <location>
        <begin position="791"/>
        <end position="800"/>
    </location>
</feature>
<feature type="compositionally biased region" description="Low complexity" evidence="4">
    <location>
        <begin position="871"/>
        <end position="881"/>
    </location>
</feature>
<feature type="mutagenesis site" description="Loss of phosphatase activity." evidence="7">
    <original>D</original>
    <variation>A</variation>
    <location>
        <position position="933"/>
    </location>
</feature>
<feature type="mutagenesis site" description="Loss of phosphatase activity; when associated with A-1065." evidence="7">
    <original>D</original>
    <variation>A</variation>
    <location>
        <position position="1064"/>
    </location>
</feature>
<feature type="mutagenesis site" description="Loss of phosphatase activity; when associated with A-1064." evidence="7">
    <original>D</original>
    <variation>A</variation>
    <location>
        <position position="1065"/>
    </location>
</feature>
<feature type="sequence conflict" description="In Ref. 1; AAM94371." evidence="12" ref="1">
    <original>A</original>
    <variation>V</variation>
    <location>
        <position position="1010"/>
    </location>
</feature>
<organism>
    <name type="scientific">Arabidopsis thaliana</name>
    <name type="common">Mouse-ear cress</name>
    <dbReference type="NCBI Taxonomy" id="3702"/>
    <lineage>
        <taxon>Eukaryota</taxon>
        <taxon>Viridiplantae</taxon>
        <taxon>Streptophyta</taxon>
        <taxon>Embryophyta</taxon>
        <taxon>Tracheophyta</taxon>
        <taxon>Spermatophyta</taxon>
        <taxon>Magnoliopsida</taxon>
        <taxon>eudicotyledons</taxon>
        <taxon>Gunneridae</taxon>
        <taxon>Pentapetalae</taxon>
        <taxon>rosids</taxon>
        <taxon>malvids</taxon>
        <taxon>Brassicales</taxon>
        <taxon>Brassicaceae</taxon>
        <taxon>Camelineae</taxon>
        <taxon>Arabidopsis</taxon>
    </lineage>
</organism>
<evidence type="ECO:0000250" key="1">
    <source>
        <dbReference type="UniProtKB" id="Q5YDB6"/>
    </source>
</evidence>
<evidence type="ECO:0000255" key="2">
    <source>
        <dbReference type="PROSITE-ProRule" id="PRU00033"/>
    </source>
</evidence>
<evidence type="ECO:0000255" key="3">
    <source>
        <dbReference type="PROSITE-ProRule" id="PRU00336"/>
    </source>
</evidence>
<evidence type="ECO:0000256" key="4">
    <source>
        <dbReference type="SAM" id="MobiDB-lite"/>
    </source>
</evidence>
<evidence type="ECO:0000269" key="5">
    <source>
    </source>
</evidence>
<evidence type="ECO:0000269" key="6">
    <source>
    </source>
</evidence>
<evidence type="ECO:0000269" key="7">
    <source>
    </source>
</evidence>
<evidence type="ECO:0000269" key="8">
    <source>
    </source>
</evidence>
<evidence type="ECO:0000303" key="9">
    <source>
    </source>
</evidence>
<evidence type="ECO:0000303" key="10">
    <source>
    </source>
</evidence>
<evidence type="ECO:0000303" key="11">
    <source>
    </source>
</evidence>
<evidence type="ECO:0000305" key="12"/>
<evidence type="ECO:0000312" key="13">
    <source>
        <dbReference type="Araport" id="AT2G33540"/>
    </source>
</evidence>
<evidence type="ECO:0000312" key="14">
    <source>
        <dbReference type="EMBL" id="AAB80671.1"/>
    </source>
</evidence>
<dbReference type="EC" id="3.1.3.16" evidence="5"/>
<dbReference type="EMBL" id="AF486633">
    <property type="protein sequence ID" value="AAM94371.1"/>
    <property type="molecule type" value="mRNA"/>
</dbReference>
<dbReference type="EMBL" id="AC002332">
    <property type="protein sequence ID" value="AAB80671.1"/>
    <property type="status" value="ALT_SEQ"/>
    <property type="molecule type" value="Genomic_DNA"/>
</dbReference>
<dbReference type="EMBL" id="CP002685">
    <property type="protein sequence ID" value="AEC08850.1"/>
    <property type="molecule type" value="Genomic_DNA"/>
</dbReference>
<dbReference type="PIR" id="G84746">
    <property type="entry name" value="G84746"/>
</dbReference>
<dbReference type="RefSeq" id="NP_180912.2">
    <property type="nucleotide sequence ID" value="NM_128914.3"/>
</dbReference>
<dbReference type="SMR" id="Q8LL04"/>
<dbReference type="BioGRID" id="3266">
    <property type="interactions" value="2"/>
</dbReference>
<dbReference type="FunCoup" id="Q8LL04">
    <property type="interactions" value="1476"/>
</dbReference>
<dbReference type="STRING" id="3702.Q8LL04"/>
<dbReference type="GlyGen" id="Q8LL04">
    <property type="glycosylation" value="3 sites, 1 O-linked glycan (1 site)"/>
</dbReference>
<dbReference type="iPTMnet" id="Q8LL04"/>
<dbReference type="PaxDb" id="3702-AT2G33540.1"/>
<dbReference type="ProteomicsDB" id="220439"/>
<dbReference type="EnsemblPlants" id="AT2G33540.1">
    <property type="protein sequence ID" value="AT2G33540.1"/>
    <property type="gene ID" value="AT2G33540"/>
</dbReference>
<dbReference type="GeneID" id="817919"/>
<dbReference type="Gramene" id="AT2G33540.1">
    <property type="protein sequence ID" value="AT2G33540.1"/>
    <property type="gene ID" value="AT2G33540"/>
</dbReference>
<dbReference type="KEGG" id="ath:AT2G33540"/>
<dbReference type="Araport" id="AT2G33540"/>
<dbReference type="TAIR" id="AT2G33540">
    <property type="gene designation" value="CPL3"/>
</dbReference>
<dbReference type="eggNOG" id="KOG0323">
    <property type="taxonomic scope" value="Eukaryota"/>
</dbReference>
<dbReference type="HOGENOM" id="CLU_007943_0_0_1"/>
<dbReference type="InParanoid" id="Q8LL04"/>
<dbReference type="OMA" id="MRDLYKY"/>
<dbReference type="PhylomeDB" id="Q8LL04"/>
<dbReference type="PRO" id="PR:Q8LL04"/>
<dbReference type="Proteomes" id="UP000006548">
    <property type="component" value="Chromosome 2"/>
</dbReference>
<dbReference type="ExpressionAtlas" id="Q8LL04">
    <property type="expression patterns" value="baseline and differential"/>
</dbReference>
<dbReference type="GO" id="GO:0005634">
    <property type="term" value="C:nucleus"/>
    <property type="evidence" value="ECO:0000314"/>
    <property type="project" value="TAIR"/>
</dbReference>
<dbReference type="GO" id="GO:0046872">
    <property type="term" value="F:metal ion binding"/>
    <property type="evidence" value="ECO:0007669"/>
    <property type="project" value="UniProtKB-KW"/>
</dbReference>
<dbReference type="GO" id="GO:0003723">
    <property type="term" value="F:RNA binding"/>
    <property type="evidence" value="ECO:0007669"/>
    <property type="project" value="UniProtKB-KW"/>
</dbReference>
<dbReference type="GO" id="GO:0008420">
    <property type="term" value="F:RNA polymerase II CTD heptapeptide repeat phosphatase activity"/>
    <property type="evidence" value="ECO:0007669"/>
    <property type="project" value="InterPro"/>
</dbReference>
<dbReference type="GO" id="GO:0006952">
    <property type="term" value="P:defense response"/>
    <property type="evidence" value="ECO:0007669"/>
    <property type="project" value="UniProtKB-KW"/>
</dbReference>
<dbReference type="GO" id="GO:0009788">
    <property type="term" value="P:negative regulation of abscisic acid-activated signaling pathway"/>
    <property type="evidence" value="ECO:0000315"/>
    <property type="project" value="UniProtKB"/>
</dbReference>
<dbReference type="GO" id="GO:1900369">
    <property type="term" value="P:negative regulation of post-transcriptional gene silencing by regulatory ncRNA"/>
    <property type="evidence" value="ECO:0000316"/>
    <property type="project" value="TAIR"/>
</dbReference>
<dbReference type="GO" id="GO:0009651">
    <property type="term" value="P:response to salt stress"/>
    <property type="evidence" value="ECO:0000270"/>
    <property type="project" value="UniProtKB"/>
</dbReference>
<dbReference type="CDD" id="cd17729">
    <property type="entry name" value="BRCT_CTDP1"/>
    <property type="match status" value="1"/>
</dbReference>
<dbReference type="CDD" id="cd07521">
    <property type="entry name" value="HAD_FCP1-like"/>
    <property type="match status" value="1"/>
</dbReference>
<dbReference type="FunFam" id="3.40.50.1000:FF:000098">
    <property type="entry name" value="RNA polymerase II C-terminal domain phosphatase-like 3"/>
    <property type="match status" value="1"/>
</dbReference>
<dbReference type="FunFam" id="3.40.50.10190:FF:000014">
    <property type="entry name" value="RNA polymerase II C-terminal domain phosphatase-like 3"/>
    <property type="match status" value="1"/>
</dbReference>
<dbReference type="Gene3D" id="3.40.50.10190">
    <property type="entry name" value="BRCT domain"/>
    <property type="match status" value="1"/>
</dbReference>
<dbReference type="Gene3D" id="3.40.50.1000">
    <property type="entry name" value="HAD superfamily/HAD-like"/>
    <property type="match status" value="1"/>
</dbReference>
<dbReference type="InterPro" id="IPR001357">
    <property type="entry name" value="BRCT_dom"/>
</dbReference>
<dbReference type="InterPro" id="IPR036420">
    <property type="entry name" value="BRCT_dom_sf"/>
</dbReference>
<dbReference type="InterPro" id="IPR039189">
    <property type="entry name" value="Fcp1"/>
</dbReference>
<dbReference type="InterPro" id="IPR004274">
    <property type="entry name" value="FCP1_dom"/>
</dbReference>
<dbReference type="InterPro" id="IPR011947">
    <property type="entry name" value="FCP1_euk"/>
</dbReference>
<dbReference type="InterPro" id="IPR036412">
    <property type="entry name" value="HAD-like_sf"/>
</dbReference>
<dbReference type="InterPro" id="IPR023214">
    <property type="entry name" value="HAD_sf"/>
</dbReference>
<dbReference type="NCBIfam" id="TIGR02250">
    <property type="entry name" value="FCP1_euk"/>
    <property type="match status" value="1"/>
</dbReference>
<dbReference type="PANTHER" id="PTHR23081:SF2">
    <property type="entry name" value="RNA POLYMERASE II C-TERMINAL DOMAIN PHOSPHATASE-LIKE 3"/>
    <property type="match status" value="1"/>
</dbReference>
<dbReference type="PANTHER" id="PTHR23081">
    <property type="entry name" value="RNA POLYMERASE II CTD PHOSPHATASE"/>
    <property type="match status" value="1"/>
</dbReference>
<dbReference type="Pfam" id="PF25505">
    <property type="entry name" value="ARM_CPL3"/>
    <property type="match status" value="1"/>
</dbReference>
<dbReference type="Pfam" id="PF00533">
    <property type="entry name" value="BRCT"/>
    <property type="match status" value="1"/>
</dbReference>
<dbReference type="Pfam" id="PF03031">
    <property type="entry name" value="NIF"/>
    <property type="match status" value="1"/>
</dbReference>
<dbReference type="SMART" id="SM00292">
    <property type="entry name" value="BRCT"/>
    <property type="match status" value="1"/>
</dbReference>
<dbReference type="SMART" id="SM00577">
    <property type="entry name" value="CPDc"/>
    <property type="match status" value="1"/>
</dbReference>
<dbReference type="SUPFAM" id="SSF52113">
    <property type="entry name" value="BRCT domain"/>
    <property type="match status" value="1"/>
</dbReference>
<dbReference type="SUPFAM" id="SSF56784">
    <property type="entry name" value="HAD-like"/>
    <property type="match status" value="1"/>
</dbReference>
<dbReference type="PROSITE" id="PS50172">
    <property type="entry name" value="BRCT"/>
    <property type="match status" value="1"/>
</dbReference>
<dbReference type="PROSITE" id="PS50969">
    <property type="entry name" value="FCP1"/>
    <property type="match status" value="1"/>
</dbReference>